<accession>B6IPF8</accession>
<protein>
    <recommendedName>
        <fullName evidence="1">Aspartate 1-decarboxylase</fullName>
        <ecNumber evidence="1">4.1.1.11</ecNumber>
    </recommendedName>
    <alternativeName>
        <fullName evidence="1">Aspartate alpha-decarboxylase</fullName>
    </alternativeName>
    <component>
        <recommendedName>
            <fullName evidence="1">Aspartate 1-decarboxylase beta chain</fullName>
        </recommendedName>
    </component>
    <component>
        <recommendedName>
            <fullName evidence="1">Aspartate 1-decarboxylase alpha chain</fullName>
        </recommendedName>
    </component>
</protein>
<name>PAND_RHOCS</name>
<organism>
    <name type="scientific">Rhodospirillum centenum (strain ATCC 51521 / SW)</name>
    <dbReference type="NCBI Taxonomy" id="414684"/>
    <lineage>
        <taxon>Bacteria</taxon>
        <taxon>Pseudomonadati</taxon>
        <taxon>Pseudomonadota</taxon>
        <taxon>Alphaproteobacteria</taxon>
        <taxon>Rhodospirillales</taxon>
        <taxon>Rhodospirillaceae</taxon>
        <taxon>Rhodospirillum</taxon>
    </lineage>
</organism>
<reference key="1">
    <citation type="submission" date="2007-03" db="EMBL/GenBank/DDBJ databases">
        <title>Genome sequence of Rhodospirillum centenum.</title>
        <authorList>
            <person name="Touchman J.W."/>
            <person name="Bauer C."/>
            <person name="Blankenship R.E."/>
        </authorList>
    </citation>
    <scope>NUCLEOTIDE SEQUENCE [LARGE SCALE GENOMIC DNA]</scope>
    <source>
        <strain>ATCC 51521 / SW</strain>
    </source>
</reference>
<sequence length="152" mass="16637">MIKVVRAKLHGITVTGADLNYHGSITLDPEICAQAGIYPMEFVEIWNRNSGARISTYVIFGEPGSGCCILNGAAARTCQRGDVIIIAASEYTTPDRLYTLKPRILTFTAGNRVDRVLRYDVFKGPDRAFDFRTLDITAGEDAAALEPVPILD</sequence>
<keyword id="KW-0068">Autocatalytic cleavage</keyword>
<keyword id="KW-0963">Cytoplasm</keyword>
<keyword id="KW-0210">Decarboxylase</keyword>
<keyword id="KW-0456">Lyase</keyword>
<keyword id="KW-0566">Pantothenate biosynthesis</keyword>
<keyword id="KW-0670">Pyruvate</keyword>
<keyword id="KW-1185">Reference proteome</keyword>
<keyword id="KW-0704">Schiff base</keyword>
<keyword id="KW-0865">Zymogen</keyword>
<proteinExistence type="inferred from homology"/>
<comment type="function">
    <text evidence="1">Catalyzes the pyruvoyl-dependent decarboxylation of aspartate to produce beta-alanine.</text>
</comment>
<comment type="catalytic activity">
    <reaction evidence="1">
        <text>L-aspartate + H(+) = beta-alanine + CO2</text>
        <dbReference type="Rhea" id="RHEA:19497"/>
        <dbReference type="ChEBI" id="CHEBI:15378"/>
        <dbReference type="ChEBI" id="CHEBI:16526"/>
        <dbReference type="ChEBI" id="CHEBI:29991"/>
        <dbReference type="ChEBI" id="CHEBI:57966"/>
        <dbReference type="EC" id="4.1.1.11"/>
    </reaction>
</comment>
<comment type="cofactor">
    <cofactor evidence="1">
        <name>pyruvate</name>
        <dbReference type="ChEBI" id="CHEBI:15361"/>
    </cofactor>
    <text evidence="1">Binds 1 pyruvoyl group covalently per subunit.</text>
</comment>
<comment type="pathway">
    <text evidence="1">Cofactor biosynthesis; (R)-pantothenate biosynthesis; beta-alanine from L-aspartate: step 1/1.</text>
</comment>
<comment type="subunit">
    <text evidence="1">Heterooctamer of four alpha and four beta subunits.</text>
</comment>
<comment type="subcellular location">
    <subcellularLocation>
        <location evidence="1">Cytoplasm</location>
    </subcellularLocation>
</comment>
<comment type="PTM">
    <text evidence="1">Is synthesized initially as an inactive proenzyme, which is activated by self-cleavage at a specific serine bond to produce a beta-subunit with a hydroxyl group at its C-terminus and an alpha-subunit with a pyruvoyl group at its N-terminus.</text>
</comment>
<comment type="similarity">
    <text evidence="1">Belongs to the PanD family.</text>
</comment>
<evidence type="ECO:0000255" key="1">
    <source>
        <dbReference type="HAMAP-Rule" id="MF_00446"/>
    </source>
</evidence>
<dbReference type="EC" id="4.1.1.11" evidence="1"/>
<dbReference type="EMBL" id="CP000613">
    <property type="protein sequence ID" value="ACI99660.1"/>
    <property type="molecule type" value="Genomic_DNA"/>
</dbReference>
<dbReference type="RefSeq" id="WP_012567445.1">
    <property type="nucleotide sequence ID" value="NC_011420.2"/>
</dbReference>
<dbReference type="SMR" id="B6IPF8"/>
<dbReference type="STRING" id="414684.RC1_2273"/>
<dbReference type="KEGG" id="rce:RC1_2273"/>
<dbReference type="eggNOG" id="COG0853">
    <property type="taxonomic scope" value="Bacteria"/>
</dbReference>
<dbReference type="HOGENOM" id="CLU_115305_1_0_5"/>
<dbReference type="OrthoDB" id="9803983at2"/>
<dbReference type="UniPathway" id="UPA00028">
    <property type="reaction ID" value="UER00002"/>
</dbReference>
<dbReference type="Proteomes" id="UP000001591">
    <property type="component" value="Chromosome"/>
</dbReference>
<dbReference type="GO" id="GO:0005829">
    <property type="term" value="C:cytosol"/>
    <property type="evidence" value="ECO:0007669"/>
    <property type="project" value="TreeGrafter"/>
</dbReference>
<dbReference type="GO" id="GO:0004068">
    <property type="term" value="F:aspartate 1-decarboxylase activity"/>
    <property type="evidence" value="ECO:0007669"/>
    <property type="project" value="UniProtKB-UniRule"/>
</dbReference>
<dbReference type="GO" id="GO:0006523">
    <property type="term" value="P:alanine biosynthetic process"/>
    <property type="evidence" value="ECO:0007669"/>
    <property type="project" value="InterPro"/>
</dbReference>
<dbReference type="GO" id="GO:0015940">
    <property type="term" value="P:pantothenate biosynthetic process"/>
    <property type="evidence" value="ECO:0007669"/>
    <property type="project" value="UniProtKB-UniRule"/>
</dbReference>
<dbReference type="CDD" id="cd06919">
    <property type="entry name" value="Asp_decarbox"/>
    <property type="match status" value="1"/>
</dbReference>
<dbReference type="Gene3D" id="2.40.40.20">
    <property type="match status" value="1"/>
</dbReference>
<dbReference type="HAMAP" id="MF_00446">
    <property type="entry name" value="PanD"/>
    <property type="match status" value="1"/>
</dbReference>
<dbReference type="InterPro" id="IPR009010">
    <property type="entry name" value="Asp_de-COase-like_dom_sf"/>
</dbReference>
<dbReference type="InterPro" id="IPR003190">
    <property type="entry name" value="Asp_decarbox"/>
</dbReference>
<dbReference type="NCBIfam" id="TIGR00223">
    <property type="entry name" value="panD"/>
    <property type="match status" value="1"/>
</dbReference>
<dbReference type="PANTHER" id="PTHR21012">
    <property type="entry name" value="ASPARTATE 1-DECARBOXYLASE"/>
    <property type="match status" value="1"/>
</dbReference>
<dbReference type="PANTHER" id="PTHR21012:SF0">
    <property type="entry name" value="ASPARTATE 1-DECARBOXYLASE"/>
    <property type="match status" value="1"/>
</dbReference>
<dbReference type="Pfam" id="PF02261">
    <property type="entry name" value="Asp_decarbox"/>
    <property type="match status" value="1"/>
</dbReference>
<dbReference type="SUPFAM" id="SSF50692">
    <property type="entry name" value="ADC-like"/>
    <property type="match status" value="1"/>
</dbReference>
<feature type="chain" id="PRO_1000192021" description="Aspartate 1-decarboxylase beta chain" evidence="1">
    <location>
        <begin position="1"/>
        <end position="23"/>
    </location>
</feature>
<feature type="chain" id="PRO_1000192022" description="Aspartate 1-decarboxylase alpha chain" evidence="1">
    <location>
        <begin position="24"/>
        <end position="152"/>
    </location>
</feature>
<feature type="active site" description="Schiff-base intermediate with substrate; via pyruvic acid" evidence="1">
    <location>
        <position position="24"/>
    </location>
</feature>
<feature type="active site" description="Proton donor" evidence="1">
    <location>
        <position position="57"/>
    </location>
</feature>
<feature type="binding site" evidence="1">
    <location>
        <position position="56"/>
    </location>
    <ligand>
        <name>substrate</name>
    </ligand>
</feature>
<feature type="binding site" evidence="1">
    <location>
        <begin position="72"/>
        <end position="74"/>
    </location>
    <ligand>
        <name>substrate</name>
    </ligand>
</feature>
<feature type="modified residue" description="Pyruvic acid (Ser)" evidence="1">
    <location>
        <position position="24"/>
    </location>
</feature>
<gene>
    <name evidence="1" type="primary">panD</name>
    <name type="ordered locus">RC1_2273</name>
</gene>